<name>PKHJ1_CHICK</name>
<gene>
    <name type="primary">PLEKHJ1</name>
    <name type="ORF">RCJMB04_4o19</name>
</gene>
<feature type="chain" id="PRO_0000309232" description="Pleckstrin homology domain-containing family J member 1">
    <location>
        <begin position="1"/>
        <end position="149"/>
    </location>
</feature>
<feature type="domain" description="PH" evidence="1">
    <location>
        <begin position="15"/>
        <end position="108"/>
    </location>
</feature>
<dbReference type="EMBL" id="AJ719649">
    <property type="protein sequence ID" value="CAG31308.1"/>
    <property type="molecule type" value="mRNA"/>
</dbReference>
<dbReference type="RefSeq" id="NP_001026674.1">
    <property type="nucleotide sequence ID" value="NM_001031503.2"/>
</dbReference>
<dbReference type="SMR" id="Q5ZLT5"/>
<dbReference type="FunCoup" id="Q5ZLT5">
    <property type="interactions" value="971"/>
</dbReference>
<dbReference type="STRING" id="9031.ENSGALP00000040417"/>
<dbReference type="PaxDb" id="9031-ENSGALP00000040417"/>
<dbReference type="Ensembl" id="ENSGALT00010067587.1">
    <property type="protein sequence ID" value="ENSGALP00010041330.1"/>
    <property type="gene ID" value="ENSGALG00010027885.1"/>
</dbReference>
<dbReference type="GeneID" id="428324"/>
<dbReference type="KEGG" id="gga:428324"/>
<dbReference type="CTD" id="55111"/>
<dbReference type="VEuPathDB" id="HostDB:geneid_428324"/>
<dbReference type="eggNOG" id="KOG0017">
    <property type="taxonomic scope" value="Eukaryota"/>
</dbReference>
<dbReference type="GeneTree" id="ENSGT00390000005235"/>
<dbReference type="HOGENOM" id="CLU_141382_0_0_1"/>
<dbReference type="InParanoid" id="Q5ZLT5"/>
<dbReference type="OMA" id="EEQCKEW"/>
<dbReference type="OrthoDB" id="10055808at2759"/>
<dbReference type="PhylomeDB" id="Q5ZLT5"/>
<dbReference type="PRO" id="PR:Q5ZLT5"/>
<dbReference type="Proteomes" id="UP000000539">
    <property type="component" value="Chromosome 28"/>
</dbReference>
<dbReference type="Bgee" id="ENSGALG00000000835">
    <property type="expression patterns" value="Expressed in colon and 13 other cell types or tissues"/>
</dbReference>
<dbReference type="GO" id="GO:0005829">
    <property type="term" value="C:cytosol"/>
    <property type="evidence" value="ECO:0007669"/>
    <property type="project" value="GOC"/>
</dbReference>
<dbReference type="GO" id="GO:0005769">
    <property type="term" value="C:early endosome"/>
    <property type="evidence" value="ECO:0000318"/>
    <property type="project" value="GO_Central"/>
</dbReference>
<dbReference type="GO" id="GO:0055037">
    <property type="term" value="C:recycling endosome"/>
    <property type="evidence" value="ECO:0000318"/>
    <property type="project" value="GO_Central"/>
</dbReference>
<dbReference type="GO" id="GO:0005802">
    <property type="term" value="C:trans-Golgi network"/>
    <property type="evidence" value="ECO:0000318"/>
    <property type="project" value="GO_Central"/>
</dbReference>
<dbReference type="GO" id="GO:0007032">
    <property type="term" value="P:endosome organization"/>
    <property type="evidence" value="ECO:0000318"/>
    <property type="project" value="GO_Central"/>
</dbReference>
<dbReference type="GO" id="GO:0001881">
    <property type="term" value="P:receptor recycling"/>
    <property type="evidence" value="ECO:0000318"/>
    <property type="project" value="GO_Central"/>
</dbReference>
<dbReference type="GO" id="GO:0042147">
    <property type="term" value="P:retrograde transport, endosome to Golgi"/>
    <property type="evidence" value="ECO:0000318"/>
    <property type="project" value="GO_Central"/>
</dbReference>
<dbReference type="CDD" id="cd13258">
    <property type="entry name" value="PH_PLEKHJ1"/>
    <property type="match status" value="1"/>
</dbReference>
<dbReference type="FunFam" id="2.30.29.30:FF:000300">
    <property type="entry name" value="pleckstrin homology domain-containing family J member 1"/>
    <property type="match status" value="1"/>
</dbReference>
<dbReference type="Gene3D" id="2.30.29.30">
    <property type="entry name" value="Pleckstrin-homology domain (PH domain)/Phosphotyrosine-binding domain (PTB)"/>
    <property type="match status" value="1"/>
</dbReference>
<dbReference type="InterPro" id="IPR045188">
    <property type="entry name" value="Boi1/Boi2-like"/>
</dbReference>
<dbReference type="InterPro" id="IPR011993">
    <property type="entry name" value="PH-like_dom_sf"/>
</dbReference>
<dbReference type="InterPro" id="IPR001849">
    <property type="entry name" value="PH_domain"/>
</dbReference>
<dbReference type="PANTHER" id="PTHR22902:SF9">
    <property type="entry name" value="PLECKSTRIN HOMOLOGY DOMAIN-CONTAINING FAMILY J MEMBER 1"/>
    <property type="match status" value="1"/>
</dbReference>
<dbReference type="PANTHER" id="PTHR22902">
    <property type="entry name" value="SESQUIPEDALIAN"/>
    <property type="match status" value="1"/>
</dbReference>
<dbReference type="Pfam" id="PF00169">
    <property type="entry name" value="PH"/>
    <property type="match status" value="1"/>
</dbReference>
<dbReference type="SMART" id="SM00233">
    <property type="entry name" value="PH"/>
    <property type="match status" value="1"/>
</dbReference>
<dbReference type="SUPFAM" id="SSF50729">
    <property type="entry name" value="PH domain-like"/>
    <property type="match status" value="1"/>
</dbReference>
<dbReference type="PROSITE" id="PS50003">
    <property type="entry name" value="PH_DOMAIN"/>
    <property type="match status" value="1"/>
</dbReference>
<organism>
    <name type="scientific">Gallus gallus</name>
    <name type="common">Chicken</name>
    <dbReference type="NCBI Taxonomy" id="9031"/>
    <lineage>
        <taxon>Eukaryota</taxon>
        <taxon>Metazoa</taxon>
        <taxon>Chordata</taxon>
        <taxon>Craniata</taxon>
        <taxon>Vertebrata</taxon>
        <taxon>Euteleostomi</taxon>
        <taxon>Archelosauria</taxon>
        <taxon>Archosauria</taxon>
        <taxon>Dinosauria</taxon>
        <taxon>Saurischia</taxon>
        <taxon>Theropoda</taxon>
        <taxon>Coelurosauria</taxon>
        <taxon>Aves</taxon>
        <taxon>Neognathae</taxon>
        <taxon>Galloanserae</taxon>
        <taxon>Galliformes</taxon>
        <taxon>Phasianidae</taxon>
        <taxon>Phasianinae</taxon>
        <taxon>Gallus</taxon>
    </lineage>
</organism>
<keyword id="KW-1185">Reference proteome</keyword>
<sequence>MRYNERELLSLSRQPAEKAAEILMRVPKKGSVLKKRLVKLVVNFLFYFRTDEAEPIGALLLEHCRITKEEENVFSISFIEEPERKYCFECDSEEQCQEWIEALKRASYEFMRRSLIFYRNEIQKMTGKDPLEQFGISEEARFQLASHKQ</sequence>
<accession>Q5ZLT5</accession>
<protein>
    <recommendedName>
        <fullName>Pleckstrin homology domain-containing family J member 1</fullName>
        <shortName>PH domain-containing family J member 1</shortName>
    </recommendedName>
</protein>
<reference key="1">
    <citation type="journal article" date="2005" name="Genome Biol.">
        <title>Full-length cDNAs from chicken bursal lymphocytes to facilitate gene function analysis.</title>
        <authorList>
            <person name="Caldwell R.B."/>
            <person name="Kierzek A.M."/>
            <person name="Arakawa H."/>
            <person name="Bezzubov Y."/>
            <person name="Zaim J."/>
            <person name="Fiedler P."/>
            <person name="Kutter S."/>
            <person name="Blagodatski A."/>
            <person name="Kostovska D."/>
            <person name="Koter M."/>
            <person name="Plachy J."/>
            <person name="Carninci P."/>
            <person name="Hayashizaki Y."/>
            <person name="Buerstedde J.-M."/>
        </authorList>
    </citation>
    <scope>NUCLEOTIDE SEQUENCE [LARGE SCALE MRNA]</scope>
    <source>
        <strain>CB</strain>
        <tissue>Bursa of Fabricius</tissue>
    </source>
</reference>
<evidence type="ECO:0000255" key="1">
    <source>
        <dbReference type="PROSITE-ProRule" id="PRU00145"/>
    </source>
</evidence>
<proteinExistence type="evidence at transcript level"/>